<organism>
    <name type="scientific">Streptococcus pneumoniae serotype 4 (strain ATCC BAA-334 / TIGR4)</name>
    <dbReference type="NCBI Taxonomy" id="170187"/>
    <lineage>
        <taxon>Bacteria</taxon>
        <taxon>Bacillati</taxon>
        <taxon>Bacillota</taxon>
        <taxon>Bacilli</taxon>
        <taxon>Lactobacillales</taxon>
        <taxon>Streptococcaceae</taxon>
        <taxon>Streptococcus</taxon>
    </lineage>
</organism>
<sequence length="245" mass="28391">MKMKQISDTTLKITISLEDLMDRGMEIADFLVPQEKTEEFFYAILDELEMPDSFLDTGMLSFRVTPKPDKVDVFVTKSKIDQNLDFEDLSDLPDMEELAQMSPDEFIKTLEKSIADKTKDDIEAIQSLEQVEVKEEEQEQAEQEAESKKEPYIYYILSFAKLADLVAFAKTVTFEMETSELYKMNERYYLTILVDIENHPSPYPAWLLARMREFADDSDISRSVLQEYGQVLMSHDAVLNLQKIG</sequence>
<protein>
    <recommendedName>
        <fullName evidence="1">Adapter protein MecA</fullName>
    </recommendedName>
</protein>
<gene>
    <name evidence="1" type="primary">mecA</name>
    <name type="ordered locus">SP_1362</name>
</gene>
<keyword id="KW-1185">Reference proteome</keyword>
<name>MECA_STRPN</name>
<dbReference type="EMBL" id="AE005672">
    <property type="protein sequence ID" value="AAK75460.1"/>
    <property type="molecule type" value="Genomic_DNA"/>
</dbReference>
<dbReference type="PIR" id="C95158">
    <property type="entry name" value="C95158"/>
</dbReference>
<dbReference type="RefSeq" id="WP_000782668.1">
    <property type="nucleotide sequence ID" value="NZ_CP155539.1"/>
</dbReference>
<dbReference type="SMR" id="Q97Q68"/>
<dbReference type="IntAct" id="Q97Q68">
    <property type="interactions" value="4"/>
</dbReference>
<dbReference type="PaxDb" id="170187-SP_1362"/>
<dbReference type="EnsemblBacteria" id="AAK75460">
    <property type="protein sequence ID" value="AAK75460"/>
    <property type="gene ID" value="SP_1362"/>
</dbReference>
<dbReference type="KEGG" id="spn:SP_1362"/>
<dbReference type="eggNOG" id="COG4862">
    <property type="taxonomic scope" value="Bacteria"/>
</dbReference>
<dbReference type="PhylomeDB" id="Q97Q68"/>
<dbReference type="BioCyc" id="SPNE170187:G1FZB-1370-MONOMER"/>
<dbReference type="Proteomes" id="UP000000585">
    <property type="component" value="Chromosome"/>
</dbReference>
<dbReference type="GO" id="GO:0030674">
    <property type="term" value="F:protein-macromolecule adaptor activity"/>
    <property type="evidence" value="ECO:0007669"/>
    <property type="project" value="UniProtKB-UniRule"/>
</dbReference>
<dbReference type="Gene3D" id="3.30.70.1950">
    <property type="match status" value="1"/>
</dbReference>
<dbReference type="HAMAP" id="MF_01124">
    <property type="entry name" value="MecA"/>
    <property type="match status" value="1"/>
</dbReference>
<dbReference type="InterPro" id="IPR038471">
    <property type="entry name" value="MecA_C_sf"/>
</dbReference>
<dbReference type="InterPro" id="IPR008681">
    <property type="entry name" value="Neg-reg_MecA"/>
</dbReference>
<dbReference type="NCBIfam" id="NF002643">
    <property type="entry name" value="PRK02315.1-4"/>
    <property type="match status" value="1"/>
</dbReference>
<dbReference type="PANTHER" id="PTHR39161">
    <property type="entry name" value="ADAPTER PROTEIN MECA"/>
    <property type="match status" value="1"/>
</dbReference>
<dbReference type="PANTHER" id="PTHR39161:SF1">
    <property type="entry name" value="ADAPTER PROTEIN MECA 1"/>
    <property type="match status" value="1"/>
</dbReference>
<dbReference type="Pfam" id="PF05389">
    <property type="entry name" value="MecA"/>
    <property type="match status" value="1"/>
</dbReference>
<dbReference type="PIRSF" id="PIRSF029008">
    <property type="entry name" value="MecA"/>
    <property type="match status" value="1"/>
</dbReference>
<evidence type="ECO:0000255" key="1">
    <source>
        <dbReference type="HAMAP-Rule" id="MF_01124"/>
    </source>
</evidence>
<feature type="chain" id="PRO_0000212289" description="Adapter protein MecA">
    <location>
        <begin position="1"/>
        <end position="245"/>
    </location>
</feature>
<proteinExistence type="evidence at protein level"/>
<accession>Q97Q68</accession>
<comment type="function">
    <text evidence="1">Enables the recognition and targeting of unfolded and aggregated proteins to the ClpC protease or to other proteins involved in proteolysis.</text>
</comment>
<comment type="subunit">
    <text evidence="1">Homodimer.</text>
</comment>
<comment type="interaction">
    <interactant intactId="EBI-2207260">
        <id>Q97Q68</id>
    </interactant>
    <interactant intactId="EBI-2207316">
        <id>P63544</id>
        <label>apt</label>
    </interactant>
    <organismsDiffer>false</organismsDiffer>
    <experiments>2</experiments>
</comment>
<comment type="interaction">
    <interactant intactId="EBI-2207260">
        <id>Q97Q68</id>
    </interactant>
    <interactant intactId="EBI-2207053">
        <id>Q97SE5</id>
        <label>gatC</label>
    </interactant>
    <organismsDiffer>false</organismsDiffer>
    <experiments>2</experiments>
</comment>
<comment type="interaction">
    <interactant intactId="EBI-2207260">
        <id>Q97Q68</id>
    </interactant>
    <interactant intactId="EBI-2206949">
        <id>Q97NV3</id>
        <label>groES</label>
    </interactant>
    <organismsDiffer>false</organismsDiffer>
    <experiments>2</experiments>
</comment>
<comment type="interaction">
    <interactant intactId="EBI-2207260">
        <id>Q97Q68</id>
    </interactant>
    <interactant intactId="EBI-2207447">
        <id>A0A0H2UNP1</id>
        <label>lacF-1</label>
    </interactant>
    <organismsDiffer>false</organismsDiffer>
    <experiments>2</experiments>
</comment>
<comment type="domain">
    <text>The N-terminal domain probably binds unfolded/aggregated proteins; the C-terminal domain interacts with ClpC.</text>
</comment>
<comment type="similarity">
    <text evidence="1">Belongs to the MecA family.</text>
</comment>
<reference key="1">
    <citation type="journal article" date="2001" name="Science">
        <title>Complete genome sequence of a virulent isolate of Streptococcus pneumoniae.</title>
        <authorList>
            <person name="Tettelin H."/>
            <person name="Nelson K.E."/>
            <person name="Paulsen I.T."/>
            <person name="Eisen J.A."/>
            <person name="Read T.D."/>
            <person name="Peterson S.N."/>
            <person name="Heidelberg J.F."/>
            <person name="DeBoy R.T."/>
            <person name="Haft D.H."/>
            <person name="Dodson R.J."/>
            <person name="Durkin A.S."/>
            <person name="Gwinn M.L."/>
            <person name="Kolonay J.F."/>
            <person name="Nelson W.C."/>
            <person name="Peterson J.D."/>
            <person name="Umayam L.A."/>
            <person name="White O."/>
            <person name="Salzberg S.L."/>
            <person name="Lewis M.R."/>
            <person name="Radune D."/>
            <person name="Holtzapple E.K."/>
            <person name="Khouri H.M."/>
            <person name="Wolf A.M."/>
            <person name="Utterback T.R."/>
            <person name="Hansen C.L."/>
            <person name="McDonald L.A."/>
            <person name="Feldblyum T.V."/>
            <person name="Angiuoli S.V."/>
            <person name="Dickinson T."/>
            <person name="Hickey E.K."/>
            <person name="Holt I.E."/>
            <person name="Loftus B.J."/>
            <person name="Yang F."/>
            <person name="Smith H.O."/>
            <person name="Venter J.C."/>
            <person name="Dougherty B.A."/>
            <person name="Morrison D.A."/>
            <person name="Hollingshead S.K."/>
            <person name="Fraser C.M."/>
        </authorList>
    </citation>
    <scope>NUCLEOTIDE SEQUENCE [LARGE SCALE GENOMIC DNA]</scope>
    <source>
        <strain>ATCC BAA-334 / TIGR4</strain>
    </source>
</reference>